<proteinExistence type="evidence at protein level"/>
<gene>
    <name type="primary">DFFB</name>
    <name type="synonym">CAD</name>
    <name type="synonym">DFF2</name>
    <name type="synonym">DFF40</name>
</gene>
<keyword id="KW-0002">3D-structure</keyword>
<keyword id="KW-0025">Alternative splicing</keyword>
<keyword id="KW-0053">Apoptosis</keyword>
<keyword id="KW-0963">Cytoplasm</keyword>
<keyword id="KW-0378">Hydrolase</keyword>
<keyword id="KW-0540">Nuclease</keyword>
<keyword id="KW-0539">Nucleus</keyword>
<keyword id="KW-1267">Proteomics identification</keyword>
<keyword id="KW-1185">Reference proteome</keyword>
<organism>
    <name type="scientific">Homo sapiens</name>
    <name type="common">Human</name>
    <dbReference type="NCBI Taxonomy" id="9606"/>
    <lineage>
        <taxon>Eukaryota</taxon>
        <taxon>Metazoa</taxon>
        <taxon>Chordata</taxon>
        <taxon>Craniata</taxon>
        <taxon>Vertebrata</taxon>
        <taxon>Euteleostomi</taxon>
        <taxon>Mammalia</taxon>
        <taxon>Eutheria</taxon>
        <taxon>Euarchontoglires</taxon>
        <taxon>Primates</taxon>
        <taxon>Haplorrhini</taxon>
        <taxon>Catarrhini</taxon>
        <taxon>Hominidae</taxon>
        <taxon>Homo</taxon>
    </lineage>
</organism>
<feature type="chain" id="PRO_0000144713" description="DNA fragmentation factor subunit beta">
    <location>
        <begin position="1"/>
        <end position="338"/>
    </location>
</feature>
<feature type="domain" description="CIDE-N" evidence="1">
    <location>
        <begin position="4"/>
        <end position="80"/>
    </location>
</feature>
<feature type="splice variant" id="VSP_001081" description="In isoform Gamma." evidence="5">
    <original>YVSDIRRFLSAFHEPQVGLIQAAQQLLCDEQAPQRQ</original>
    <variation>SVGVRARTKTRDTSSLSPGDCQALGNGGRCGQRLFL</variation>
    <location>
        <begin position="81"/>
        <end position="116"/>
    </location>
</feature>
<feature type="splice variant" id="VSP_001083" description="In isoform Delta." evidence="5">
    <original>YVSDIRRFLSAFHEPQVGLIQAA</original>
    <variation>WFCHVSQDSLTLLGSSCPPALVS</variation>
    <location>
        <begin position="81"/>
        <end position="103"/>
    </location>
</feature>
<feature type="splice variant" id="VSP_001084" description="In isoform Delta." evidence="5">
    <location>
        <begin position="104"/>
        <end position="338"/>
    </location>
</feature>
<feature type="splice variant" id="VSP_001082" description="In isoform Gamma." evidence="5">
    <location>
        <begin position="117"/>
        <end position="338"/>
    </location>
</feature>
<feature type="splice variant" id="VSP_001080" description="In isoform Beta." evidence="5">
    <original>IEKKRTIIPTLVEAIKEQDGREVDWEYFYGLLFTSENLKLVHIVCHKKTTHKLNCDPSRIYKPQTRLKRKQPVRKRQ</original>
    <variation>DGVLLCGPG</variation>
    <location>
        <begin position="262"/>
        <end position="338"/>
    </location>
</feature>
<feature type="sequence variant" id="VAR_009305" description="In dbSNP:rs12738235." evidence="2">
    <original>R</original>
    <variation>K</variation>
    <location>
        <position position="196"/>
    </location>
</feature>
<feature type="sequence variant" id="VAR_048737" description="In dbSNP:rs12564400.">
    <original>K</original>
    <variation>R</variation>
    <location>
        <position position="277"/>
    </location>
</feature>
<feature type="strand" evidence="8">
    <location>
        <begin position="9"/>
        <end position="11"/>
    </location>
</feature>
<feature type="strand" evidence="8">
    <location>
        <begin position="13"/>
        <end position="16"/>
    </location>
</feature>
<feature type="helix" evidence="8">
    <location>
        <begin position="26"/>
        <end position="36"/>
    </location>
</feature>
<feature type="turn" evidence="8">
    <location>
        <begin position="41"/>
        <end position="43"/>
    </location>
</feature>
<feature type="strand" evidence="8">
    <location>
        <begin position="44"/>
        <end position="51"/>
    </location>
</feature>
<feature type="strand" evidence="8">
    <location>
        <begin position="57"/>
        <end position="59"/>
    </location>
</feature>
<feature type="strand" evidence="8">
    <location>
        <begin position="69"/>
        <end position="72"/>
    </location>
</feature>
<feature type="strand" evidence="8">
    <location>
        <begin position="74"/>
        <end position="76"/>
    </location>
</feature>
<reference key="1">
    <citation type="journal article" date="1998" name="Proc. Natl. Acad. Sci. U.S.A.">
        <title>The 40-kDa subunit of DNA fragmentation factor induces DNA fragmentation and chromatin condensation during apoptosis.</title>
        <authorList>
            <person name="Liu X."/>
            <person name="Li P."/>
            <person name="Widlak P."/>
            <person name="Zou H."/>
            <person name="Luo X."/>
            <person name="Garrard W.T."/>
            <person name="Wang X."/>
        </authorList>
    </citation>
    <scope>NUCLEOTIDE SEQUENCE [MRNA] (ISOFORM ALPHA)</scope>
</reference>
<reference key="2">
    <citation type="journal article" date="1998" name="Proc. Natl. Acad. Sci. U.S.A.">
        <title>Molecular cloning and characterization of human caspase-activated DNase.</title>
        <authorList>
            <person name="Mukae N."/>
            <person name="Enari M."/>
            <person name="Sakahira H."/>
            <person name="Fukuda Y."/>
            <person name="Inazawa J."/>
            <person name="Toh H."/>
            <person name="Nagata S."/>
        </authorList>
    </citation>
    <scope>NUCLEOTIDE SEQUENCE [MRNA] (ISOFORM ALPHA)</scope>
</reference>
<reference key="3">
    <citation type="journal article" date="1998" name="Curr. Biol.">
        <title>CPAN, a human nuclease regulated by the caspase-sensitive inhibitor DFF45.</title>
        <authorList>
            <person name="Halenbeck R."/>
            <person name="MacDonald H."/>
            <person name="Roulston A."/>
            <person name="Chen T.T."/>
            <person name="Conroy L."/>
            <person name="Williams L.T."/>
        </authorList>
    </citation>
    <scope>NUCLEOTIDE SEQUENCE [MRNA] (ISOFORM ALPHA)</scope>
    <source>
        <tissue>Pancreas</tissue>
    </source>
</reference>
<reference key="4">
    <citation type="submission" date="1999-06" db="EMBL/GenBank/DDBJ databases">
        <title>DFF40 delta.</title>
        <authorList>
            <person name="Nakagawara A."/>
            <person name="Takahashi M."/>
            <person name="Takada N."/>
            <person name="Kawamoto T."/>
        </authorList>
    </citation>
    <scope>NUCLEOTIDE SEQUENCE [MRNA] (ISOFORMS BETA; GAMMA AND DELTA)</scope>
    <source>
        <tissue>Fetal brain</tissue>
    </source>
</reference>
<reference key="5">
    <citation type="journal article" date="2004" name="Nat. Genet.">
        <title>Complete sequencing and characterization of 21,243 full-length human cDNAs.</title>
        <authorList>
            <person name="Ota T."/>
            <person name="Suzuki Y."/>
            <person name="Nishikawa T."/>
            <person name="Otsuki T."/>
            <person name="Sugiyama T."/>
            <person name="Irie R."/>
            <person name="Wakamatsu A."/>
            <person name="Hayashi K."/>
            <person name="Sato H."/>
            <person name="Nagai K."/>
            <person name="Kimura K."/>
            <person name="Makita H."/>
            <person name="Sekine M."/>
            <person name="Obayashi M."/>
            <person name="Nishi T."/>
            <person name="Shibahara T."/>
            <person name="Tanaka T."/>
            <person name="Ishii S."/>
            <person name="Yamamoto J."/>
            <person name="Saito K."/>
            <person name="Kawai Y."/>
            <person name="Isono Y."/>
            <person name="Nakamura Y."/>
            <person name="Nagahari K."/>
            <person name="Murakami K."/>
            <person name="Yasuda T."/>
            <person name="Iwayanagi T."/>
            <person name="Wagatsuma M."/>
            <person name="Shiratori A."/>
            <person name="Sudo H."/>
            <person name="Hosoiri T."/>
            <person name="Kaku Y."/>
            <person name="Kodaira H."/>
            <person name="Kondo H."/>
            <person name="Sugawara M."/>
            <person name="Takahashi M."/>
            <person name="Kanda K."/>
            <person name="Yokoi T."/>
            <person name="Furuya T."/>
            <person name="Kikkawa E."/>
            <person name="Omura Y."/>
            <person name="Abe K."/>
            <person name="Kamihara K."/>
            <person name="Katsuta N."/>
            <person name="Sato K."/>
            <person name="Tanikawa M."/>
            <person name="Yamazaki M."/>
            <person name="Ninomiya K."/>
            <person name="Ishibashi T."/>
            <person name="Yamashita H."/>
            <person name="Murakawa K."/>
            <person name="Fujimori K."/>
            <person name="Tanai H."/>
            <person name="Kimata M."/>
            <person name="Watanabe M."/>
            <person name="Hiraoka S."/>
            <person name="Chiba Y."/>
            <person name="Ishida S."/>
            <person name="Ono Y."/>
            <person name="Takiguchi S."/>
            <person name="Watanabe S."/>
            <person name="Yosida M."/>
            <person name="Hotuta T."/>
            <person name="Kusano J."/>
            <person name="Kanehori K."/>
            <person name="Takahashi-Fujii A."/>
            <person name="Hara H."/>
            <person name="Tanase T.-O."/>
            <person name="Nomura Y."/>
            <person name="Togiya S."/>
            <person name="Komai F."/>
            <person name="Hara R."/>
            <person name="Takeuchi K."/>
            <person name="Arita M."/>
            <person name="Imose N."/>
            <person name="Musashino K."/>
            <person name="Yuuki H."/>
            <person name="Oshima A."/>
            <person name="Sasaki N."/>
            <person name="Aotsuka S."/>
            <person name="Yoshikawa Y."/>
            <person name="Matsunawa H."/>
            <person name="Ichihara T."/>
            <person name="Shiohata N."/>
            <person name="Sano S."/>
            <person name="Moriya S."/>
            <person name="Momiyama H."/>
            <person name="Satoh N."/>
            <person name="Takami S."/>
            <person name="Terashima Y."/>
            <person name="Suzuki O."/>
            <person name="Nakagawa S."/>
            <person name="Senoh A."/>
            <person name="Mizoguchi H."/>
            <person name="Goto Y."/>
            <person name="Shimizu F."/>
            <person name="Wakebe H."/>
            <person name="Hishigaki H."/>
            <person name="Watanabe T."/>
            <person name="Sugiyama A."/>
            <person name="Takemoto M."/>
            <person name="Kawakami B."/>
            <person name="Yamazaki M."/>
            <person name="Watanabe K."/>
            <person name="Kumagai A."/>
            <person name="Itakura S."/>
            <person name="Fukuzumi Y."/>
            <person name="Fujimori Y."/>
            <person name="Komiyama M."/>
            <person name="Tashiro H."/>
            <person name="Tanigami A."/>
            <person name="Fujiwara T."/>
            <person name="Ono T."/>
            <person name="Yamada K."/>
            <person name="Fujii Y."/>
            <person name="Ozaki K."/>
            <person name="Hirao M."/>
            <person name="Ohmori Y."/>
            <person name="Kawabata A."/>
            <person name="Hikiji T."/>
            <person name="Kobatake N."/>
            <person name="Inagaki H."/>
            <person name="Ikema Y."/>
            <person name="Okamoto S."/>
            <person name="Okitani R."/>
            <person name="Kawakami T."/>
            <person name="Noguchi S."/>
            <person name="Itoh T."/>
            <person name="Shigeta K."/>
            <person name="Senba T."/>
            <person name="Matsumura K."/>
            <person name="Nakajima Y."/>
            <person name="Mizuno T."/>
            <person name="Morinaga M."/>
            <person name="Sasaki M."/>
            <person name="Togashi T."/>
            <person name="Oyama M."/>
            <person name="Hata H."/>
            <person name="Watanabe M."/>
            <person name="Komatsu T."/>
            <person name="Mizushima-Sugano J."/>
            <person name="Satoh T."/>
            <person name="Shirai Y."/>
            <person name="Takahashi Y."/>
            <person name="Nakagawa K."/>
            <person name="Okumura K."/>
            <person name="Nagase T."/>
            <person name="Nomura N."/>
            <person name="Kikuchi H."/>
            <person name="Masuho Y."/>
            <person name="Yamashita R."/>
            <person name="Nakai K."/>
            <person name="Yada T."/>
            <person name="Nakamura Y."/>
            <person name="Ohara O."/>
            <person name="Isogai T."/>
            <person name="Sugano S."/>
        </authorList>
    </citation>
    <scope>NUCLEOTIDE SEQUENCE [LARGE SCALE MRNA] (ISOFORM ALPHA)</scope>
</reference>
<reference key="6">
    <citation type="journal article" date="2006" name="Nature">
        <title>The DNA sequence and biological annotation of human chromosome 1.</title>
        <authorList>
            <person name="Gregory S.G."/>
            <person name="Barlow K.F."/>
            <person name="McLay K.E."/>
            <person name="Kaul R."/>
            <person name="Swarbreck D."/>
            <person name="Dunham A."/>
            <person name="Scott C.E."/>
            <person name="Howe K.L."/>
            <person name="Woodfine K."/>
            <person name="Spencer C.C.A."/>
            <person name="Jones M.C."/>
            <person name="Gillson C."/>
            <person name="Searle S."/>
            <person name="Zhou Y."/>
            <person name="Kokocinski F."/>
            <person name="McDonald L."/>
            <person name="Evans R."/>
            <person name="Phillips K."/>
            <person name="Atkinson A."/>
            <person name="Cooper R."/>
            <person name="Jones C."/>
            <person name="Hall R.E."/>
            <person name="Andrews T.D."/>
            <person name="Lloyd C."/>
            <person name="Ainscough R."/>
            <person name="Almeida J.P."/>
            <person name="Ambrose K.D."/>
            <person name="Anderson F."/>
            <person name="Andrew R.W."/>
            <person name="Ashwell R.I.S."/>
            <person name="Aubin K."/>
            <person name="Babbage A.K."/>
            <person name="Bagguley C.L."/>
            <person name="Bailey J."/>
            <person name="Beasley H."/>
            <person name="Bethel G."/>
            <person name="Bird C.P."/>
            <person name="Bray-Allen S."/>
            <person name="Brown J.Y."/>
            <person name="Brown A.J."/>
            <person name="Buckley D."/>
            <person name="Burton J."/>
            <person name="Bye J."/>
            <person name="Carder C."/>
            <person name="Chapman J.C."/>
            <person name="Clark S.Y."/>
            <person name="Clarke G."/>
            <person name="Clee C."/>
            <person name="Cobley V."/>
            <person name="Collier R.E."/>
            <person name="Corby N."/>
            <person name="Coville G.J."/>
            <person name="Davies J."/>
            <person name="Deadman R."/>
            <person name="Dunn M."/>
            <person name="Earthrowl M."/>
            <person name="Ellington A.G."/>
            <person name="Errington H."/>
            <person name="Frankish A."/>
            <person name="Frankland J."/>
            <person name="French L."/>
            <person name="Garner P."/>
            <person name="Garnett J."/>
            <person name="Gay L."/>
            <person name="Ghori M.R.J."/>
            <person name="Gibson R."/>
            <person name="Gilby L.M."/>
            <person name="Gillett W."/>
            <person name="Glithero R.J."/>
            <person name="Grafham D.V."/>
            <person name="Griffiths C."/>
            <person name="Griffiths-Jones S."/>
            <person name="Grocock R."/>
            <person name="Hammond S."/>
            <person name="Harrison E.S.I."/>
            <person name="Hart E."/>
            <person name="Haugen E."/>
            <person name="Heath P.D."/>
            <person name="Holmes S."/>
            <person name="Holt K."/>
            <person name="Howden P.J."/>
            <person name="Hunt A.R."/>
            <person name="Hunt S.E."/>
            <person name="Hunter G."/>
            <person name="Isherwood J."/>
            <person name="James R."/>
            <person name="Johnson C."/>
            <person name="Johnson D."/>
            <person name="Joy A."/>
            <person name="Kay M."/>
            <person name="Kershaw J.K."/>
            <person name="Kibukawa M."/>
            <person name="Kimberley A.M."/>
            <person name="King A."/>
            <person name="Knights A.J."/>
            <person name="Lad H."/>
            <person name="Laird G."/>
            <person name="Lawlor S."/>
            <person name="Leongamornlert D.A."/>
            <person name="Lloyd D.M."/>
            <person name="Loveland J."/>
            <person name="Lovell J."/>
            <person name="Lush M.J."/>
            <person name="Lyne R."/>
            <person name="Martin S."/>
            <person name="Mashreghi-Mohammadi M."/>
            <person name="Matthews L."/>
            <person name="Matthews N.S.W."/>
            <person name="McLaren S."/>
            <person name="Milne S."/>
            <person name="Mistry S."/>
            <person name="Moore M.J.F."/>
            <person name="Nickerson T."/>
            <person name="O'Dell C.N."/>
            <person name="Oliver K."/>
            <person name="Palmeiri A."/>
            <person name="Palmer S.A."/>
            <person name="Parker A."/>
            <person name="Patel D."/>
            <person name="Pearce A.V."/>
            <person name="Peck A.I."/>
            <person name="Pelan S."/>
            <person name="Phelps K."/>
            <person name="Phillimore B.J."/>
            <person name="Plumb R."/>
            <person name="Rajan J."/>
            <person name="Raymond C."/>
            <person name="Rouse G."/>
            <person name="Saenphimmachak C."/>
            <person name="Sehra H.K."/>
            <person name="Sheridan E."/>
            <person name="Shownkeen R."/>
            <person name="Sims S."/>
            <person name="Skuce C.D."/>
            <person name="Smith M."/>
            <person name="Steward C."/>
            <person name="Subramanian S."/>
            <person name="Sycamore N."/>
            <person name="Tracey A."/>
            <person name="Tromans A."/>
            <person name="Van Helmond Z."/>
            <person name="Wall M."/>
            <person name="Wallis J.M."/>
            <person name="White S."/>
            <person name="Whitehead S.L."/>
            <person name="Wilkinson J.E."/>
            <person name="Willey D.L."/>
            <person name="Williams H."/>
            <person name="Wilming L."/>
            <person name="Wray P.W."/>
            <person name="Wu Z."/>
            <person name="Coulson A."/>
            <person name="Vaudin M."/>
            <person name="Sulston J.E."/>
            <person name="Durbin R.M."/>
            <person name="Hubbard T."/>
            <person name="Wooster R."/>
            <person name="Dunham I."/>
            <person name="Carter N.P."/>
            <person name="McVean G."/>
            <person name="Ross M.T."/>
            <person name="Harrow J."/>
            <person name="Olson M.V."/>
            <person name="Beck S."/>
            <person name="Rogers J."/>
            <person name="Bentley D.R."/>
        </authorList>
    </citation>
    <scope>NUCLEOTIDE SEQUENCE [LARGE SCALE GENOMIC DNA]</scope>
</reference>
<reference key="7">
    <citation type="journal article" date="2004" name="Genome Res.">
        <title>The status, quality, and expansion of the NIH full-length cDNA project: the Mammalian Gene Collection (MGC).</title>
        <authorList>
            <consortium name="The MGC Project Team"/>
        </authorList>
    </citation>
    <scope>NUCLEOTIDE SEQUENCE [LARGE SCALE MRNA] (ISOFORM ALPHA)</scope>
    <source>
        <tissue>Lung</tissue>
    </source>
</reference>
<reference key="8">
    <citation type="journal article" date="2004" name="Genome Biol.">
        <title>An unappreciated role for RNA surveillance.</title>
        <authorList>
            <person name="Hillman R.T."/>
            <person name="Green R.E."/>
            <person name="Brenner S.E."/>
        </authorList>
    </citation>
    <scope>SPLICE ISOFORM(S) THAT ARE POTENTIAL NMD TARGET(S)</scope>
</reference>
<reference key="9">
    <citation type="journal article" date="2010" name="Apoptosis">
        <title>Histone H1 subtype preferences of DFF40 and possible nuclear localization of DFF40/45 in normal and trichostatin A-treated NB4 leukemic cells.</title>
        <authorList>
            <person name="Ninios Y.P."/>
            <person name="Sekeri-Pataryas K.E."/>
            <person name="Sourlingas T.G."/>
        </authorList>
    </citation>
    <scope>INTERACTION WITH H1-1</scope>
</reference>
<reference key="10">
    <citation type="journal article" date="2012" name="Proc. Natl. Acad. Sci. U.S.A.">
        <title>N-terminal acetylome analyses and functional insights of the N-terminal acetyltransferase NatB.</title>
        <authorList>
            <person name="Van Damme P."/>
            <person name="Lasa M."/>
            <person name="Polevoda B."/>
            <person name="Gazquez C."/>
            <person name="Elosegui-Artola A."/>
            <person name="Kim D.S."/>
            <person name="De Juan-Pardo E."/>
            <person name="Demeyer K."/>
            <person name="Hole K."/>
            <person name="Larrea E."/>
            <person name="Timmerman E."/>
            <person name="Prieto J."/>
            <person name="Arnesen T."/>
            <person name="Sherman F."/>
            <person name="Gevaert K."/>
            <person name="Aldabe R."/>
        </authorList>
    </citation>
    <scope>IDENTIFICATION BY MASS SPECTROMETRY [LARGE SCALE ANALYSIS]</scope>
</reference>
<reference evidence="7" key="11">
    <citation type="journal article" date="2001" name="Proc. Natl. Acad. Sci. U.S.A.">
        <title>Solution structure of DFF40 and DFF45 N-terminal domain complex and mutual chaperone activity of DFF40 and DFF45.</title>
        <authorList>
            <person name="Zhou P."/>
            <person name="Lugovskoy A.A."/>
            <person name="McCarty J.S."/>
            <person name="Li P."/>
            <person name="Wagner G."/>
        </authorList>
    </citation>
    <scope>STRUCTURE BY NMR OF 1-80</scope>
    <scope>SUBUNIT</scope>
</reference>
<reference key="12">
    <citation type="journal article" date="2000" name="Hum. Genet.">
        <title>Structure and mutation analysis of the gene encoding DNA fragmentation factor 40 (caspase-activated nuclease), a candidate neuroblastoma tumour suppressor gene.</title>
        <authorList>
            <person name="Judson H."/>
            <person name="van Roy N."/>
            <person name="Strain L."/>
            <person name="Vandesompele J."/>
            <person name="Van Gele M."/>
            <person name="Speleman F."/>
            <person name="Bonthron D.T."/>
        </authorList>
    </citation>
    <scope>VARIANT LYS-196</scope>
</reference>
<dbReference type="EC" id="3.-.-.-"/>
<dbReference type="EMBL" id="AF064019">
    <property type="protein sequence ID" value="AAC39920.1"/>
    <property type="molecule type" value="mRNA"/>
</dbReference>
<dbReference type="EMBL" id="AB013918">
    <property type="protein sequence ID" value="BAA32250.1"/>
    <property type="molecule type" value="mRNA"/>
</dbReference>
<dbReference type="EMBL" id="AF039210">
    <property type="protein sequence ID" value="AAC39709.1"/>
    <property type="molecule type" value="mRNA"/>
</dbReference>
<dbReference type="EMBL" id="AB028911">
    <property type="protein sequence ID" value="BAB40447.1"/>
    <property type="molecule type" value="mRNA"/>
</dbReference>
<dbReference type="EMBL" id="AB028912">
    <property type="protein sequence ID" value="BAB40448.1"/>
    <property type="molecule type" value="mRNA"/>
</dbReference>
<dbReference type="EMBL" id="AB028913">
    <property type="protein sequence ID" value="BAB40449.1"/>
    <property type="molecule type" value="mRNA"/>
</dbReference>
<dbReference type="EMBL" id="AK290877">
    <property type="protein sequence ID" value="BAF83566.1"/>
    <property type="molecule type" value="mRNA"/>
</dbReference>
<dbReference type="EMBL" id="AL691523">
    <property type="status" value="NOT_ANNOTATED_CDS"/>
    <property type="molecule type" value="Genomic_DNA"/>
</dbReference>
<dbReference type="EMBL" id="BC048797">
    <property type="protein sequence ID" value="AAH48797.1"/>
    <property type="molecule type" value="mRNA"/>
</dbReference>
<dbReference type="CCDS" id="CCDS52.1">
    <molecule id="O76075-1"/>
</dbReference>
<dbReference type="RefSeq" id="NP_001307061.1">
    <property type="nucleotide sequence ID" value="NM_001320132.1"/>
</dbReference>
<dbReference type="RefSeq" id="NP_004393.1">
    <molecule id="O76075-1"/>
    <property type="nucleotide sequence ID" value="NM_004402.4"/>
</dbReference>
<dbReference type="PDB" id="1IBX">
    <property type="method" value="NMR"/>
    <property type="chains" value="A=1-80"/>
</dbReference>
<dbReference type="PDBsum" id="1IBX"/>
<dbReference type="SMR" id="O76075"/>
<dbReference type="BioGRID" id="108041">
    <property type="interactions" value="30"/>
</dbReference>
<dbReference type="ComplexPortal" id="CPX-2498">
    <property type="entry name" value="DNA fragmentation factor complex"/>
</dbReference>
<dbReference type="FunCoup" id="O76075">
    <property type="interactions" value="1952"/>
</dbReference>
<dbReference type="IntAct" id="O76075">
    <property type="interactions" value="24"/>
</dbReference>
<dbReference type="MINT" id="O76075"/>
<dbReference type="STRING" id="9606.ENSP00000339524"/>
<dbReference type="iPTMnet" id="O76075"/>
<dbReference type="PhosphoSitePlus" id="O76075"/>
<dbReference type="BioMuta" id="DFFB"/>
<dbReference type="jPOST" id="O76075"/>
<dbReference type="MassIVE" id="O76075"/>
<dbReference type="PaxDb" id="9606-ENSP00000339524"/>
<dbReference type="PeptideAtlas" id="O76075"/>
<dbReference type="ProteomicsDB" id="50376">
    <molecule id="O76075-1"/>
</dbReference>
<dbReference type="ProteomicsDB" id="50377">
    <molecule id="O76075-2"/>
</dbReference>
<dbReference type="ProteomicsDB" id="50378">
    <molecule id="O76075-3"/>
</dbReference>
<dbReference type="ProteomicsDB" id="50379">
    <molecule id="O76075-4"/>
</dbReference>
<dbReference type="Pumba" id="O76075"/>
<dbReference type="Antibodypedia" id="3813">
    <property type="antibodies" value="537 antibodies from 38 providers"/>
</dbReference>
<dbReference type="DNASU" id="1677"/>
<dbReference type="Ensembl" id="ENST00000339350.7">
    <molecule id="O76075-3"/>
    <property type="protein sequence ID" value="ENSP00000343218.3"/>
    <property type="gene ID" value="ENSG00000169598.17"/>
</dbReference>
<dbReference type="Ensembl" id="ENST00000378209.8">
    <molecule id="O76075-1"/>
    <property type="protein sequence ID" value="ENSP00000367454.4"/>
    <property type="gene ID" value="ENSG00000169598.17"/>
</dbReference>
<dbReference type="Ensembl" id="ENST00000491998.5">
    <molecule id="O76075-2"/>
    <property type="protein sequence ID" value="ENSP00000436775.1"/>
    <property type="gene ID" value="ENSG00000169598.17"/>
</dbReference>
<dbReference type="GeneID" id="1677"/>
<dbReference type="KEGG" id="hsa:1677"/>
<dbReference type="MANE-Select" id="ENST00000378209.8">
    <property type="protein sequence ID" value="ENSP00000367454.4"/>
    <property type="RefSeq nucleotide sequence ID" value="NM_004402.4"/>
    <property type="RefSeq protein sequence ID" value="NP_004393.1"/>
</dbReference>
<dbReference type="UCSC" id="uc001alc.5">
    <molecule id="O76075-1"/>
    <property type="organism name" value="human"/>
</dbReference>
<dbReference type="AGR" id="HGNC:2773"/>
<dbReference type="CTD" id="1677"/>
<dbReference type="DisGeNET" id="1677"/>
<dbReference type="GeneCards" id="DFFB"/>
<dbReference type="HGNC" id="HGNC:2773">
    <property type="gene designation" value="DFFB"/>
</dbReference>
<dbReference type="HPA" id="ENSG00000169598">
    <property type="expression patterns" value="Tissue enhanced (intestine)"/>
</dbReference>
<dbReference type="MIM" id="601883">
    <property type="type" value="gene"/>
</dbReference>
<dbReference type="neXtProt" id="NX_O76075"/>
<dbReference type="OpenTargets" id="ENSG00000169598"/>
<dbReference type="PharmGKB" id="PA27255"/>
<dbReference type="VEuPathDB" id="HostDB:ENSG00000169598"/>
<dbReference type="eggNOG" id="ENOG502R0RF">
    <property type="taxonomic scope" value="Eukaryota"/>
</dbReference>
<dbReference type="GeneTree" id="ENSGT00390000014490"/>
<dbReference type="HOGENOM" id="CLU_049235_1_1_1"/>
<dbReference type="InParanoid" id="O76075"/>
<dbReference type="OMA" id="AQYHGSY"/>
<dbReference type="OrthoDB" id="9943677at2759"/>
<dbReference type="PAN-GO" id="O76075">
    <property type="GO annotations" value="2 GO annotations based on evolutionary models"/>
</dbReference>
<dbReference type="PhylomeDB" id="O76075"/>
<dbReference type="TreeFam" id="TF102022"/>
<dbReference type="PathwayCommons" id="O76075"/>
<dbReference type="Reactome" id="R-HSA-140342">
    <property type="pathway name" value="Apoptosis induced DNA fragmentation"/>
</dbReference>
<dbReference type="SignaLink" id="O76075"/>
<dbReference type="SIGNOR" id="O76075"/>
<dbReference type="BioGRID-ORCS" id="1677">
    <property type="hits" value="22 hits in 1157 CRISPR screens"/>
</dbReference>
<dbReference type="ChiTaRS" id="DFFB">
    <property type="organism name" value="human"/>
</dbReference>
<dbReference type="EvolutionaryTrace" id="O76075"/>
<dbReference type="GeneWiki" id="DFFB"/>
<dbReference type="GenomeRNAi" id="1677"/>
<dbReference type="Pharos" id="O76075">
    <property type="development level" value="Tbio"/>
</dbReference>
<dbReference type="PRO" id="PR:O76075"/>
<dbReference type="Proteomes" id="UP000005640">
    <property type="component" value="Chromosome 1"/>
</dbReference>
<dbReference type="RNAct" id="O76075">
    <property type="molecule type" value="protein"/>
</dbReference>
<dbReference type="Bgee" id="ENSG00000169598">
    <property type="expression patterns" value="Expressed in cerebellar hemisphere and 144 other cell types or tissues"/>
</dbReference>
<dbReference type="ExpressionAtlas" id="O76075">
    <property type="expression patterns" value="baseline and differential"/>
</dbReference>
<dbReference type="GO" id="GO:0000785">
    <property type="term" value="C:chromatin"/>
    <property type="evidence" value="ECO:0000314"/>
    <property type="project" value="UniProtKB"/>
</dbReference>
<dbReference type="GO" id="GO:0005829">
    <property type="term" value="C:cytosol"/>
    <property type="evidence" value="ECO:0000314"/>
    <property type="project" value="UniProtKB"/>
</dbReference>
<dbReference type="GO" id="GO:0005730">
    <property type="term" value="C:nucleolus"/>
    <property type="evidence" value="ECO:0000314"/>
    <property type="project" value="HPA"/>
</dbReference>
<dbReference type="GO" id="GO:0005654">
    <property type="term" value="C:nucleoplasm"/>
    <property type="evidence" value="ECO:0000314"/>
    <property type="project" value="HPA"/>
</dbReference>
<dbReference type="GO" id="GO:0005634">
    <property type="term" value="C:nucleus"/>
    <property type="evidence" value="ECO:0000314"/>
    <property type="project" value="UniProtKB"/>
</dbReference>
<dbReference type="GO" id="GO:0032991">
    <property type="term" value="C:protein-containing complex"/>
    <property type="evidence" value="ECO:0000314"/>
    <property type="project" value="CAFA"/>
</dbReference>
<dbReference type="GO" id="GO:0097718">
    <property type="term" value="F:disordered domain specific binding"/>
    <property type="evidence" value="ECO:0000353"/>
    <property type="project" value="CAFA"/>
</dbReference>
<dbReference type="GO" id="GO:0003677">
    <property type="term" value="F:DNA binding"/>
    <property type="evidence" value="ECO:0007669"/>
    <property type="project" value="Ensembl"/>
</dbReference>
<dbReference type="GO" id="GO:0004520">
    <property type="term" value="F:DNA endonuclease activity"/>
    <property type="evidence" value="ECO:0007669"/>
    <property type="project" value="InterPro"/>
</dbReference>
<dbReference type="GO" id="GO:0004536">
    <property type="term" value="F:DNA nuclease activity"/>
    <property type="evidence" value="ECO:0000315"/>
    <property type="project" value="CAFA"/>
</dbReference>
<dbReference type="GO" id="GO:0019899">
    <property type="term" value="F:enzyme binding"/>
    <property type="evidence" value="ECO:0000353"/>
    <property type="project" value="UniProtKB"/>
</dbReference>
<dbReference type="GO" id="GO:0042802">
    <property type="term" value="F:identical protein binding"/>
    <property type="evidence" value="ECO:0000353"/>
    <property type="project" value="CAFA"/>
</dbReference>
<dbReference type="GO" id="GO:0019904">
    <property type="term" value="F:protein domain specific binding"/>
    <property type="evidence" value="ECO:0000353"/>
    <property type="project" value="CAFA"/>
</dbReference>
<dbReference type="GO" id="GO:0030263">
    <property type="term" value="P:apoptotic chromosome condensation"/>
    <property type="evidence" value="ECO:0000314"/>
    <property type="project" value="UniProtKB"/>
</dbReference>
<dbReference type="GO" id="GO:0006309">
    <property type="term" value="P:apoptotic DNA fragmentation"/>
    <property type="evidence" value="ECO:0000314"/>
    <property type="project" value="MGI"/>
</dbReference>
<dbReference type="GO" id="GO:0006308">
    <property type="term" value="P:DNA catabolic process"/>
    <property type="evidence" value="ECO:0000315"/>
    <property type="project" value="CAFA"/>
</dbReference>
<dbReference type="GO" id="GO:1902511">
    <property type="term" value="P:negative regulation of apoptotic DNA fragmentation"/>
    <property type="evidence" value="ECO:0000314"/>
    <property type="project" value="ComplexPortal"/>
</dbReference>
<dbReference type="CDD" id="cd06535">
    <property type="entry name" value="CIDE_N_CAD"/>
    <property type="match status" value="1"/>
</dbReference>
<dbReference type="FunFam" id="3.10.20.10:FF:000006">
    <property type="entry name" value="DNA fragmentation factor subunit beta"/>
    <property type="match status" value="1"/>
</dbReference>
<dbReference type="Gene3D" id="3.10.20.10">
    <property type="match status" value="1"/>
</dbReference>
<dbReference type="Gene3D" id="6.10.140.170">
    <property type="match status" value="1"/>
</dbReference>
<dbReference type="InterPro" id="IPR003508">
    <property type="entry name" value="CIDE-N_dom"/>
</dbReference>
<dbReference type="InterPro" id="IPR039729">
    <property type="entry name" value="DFF40"/>
</dbReference>
<dbReference type="InterPro" id="IPR015311">
    <property type="entry name" value="DFF40_C"/>
</dbReference>
<dbReference type="InterPro" id="IPR044925">
    <property type="entry name" value="His-Me_finger_sf"/>
</dbReference>
<dbReference type="PANTHER" id="PTHR13067">
    <property type="entry name" value="CASPASE-ACTIVATED DNASE"/>
    <property type="match status" value="1"/>
</dbReference>
<dbReference type="PANTHER" id="PTHR13067:SF2">
    <property type="entry name" value="CASPASE-ACTIVATED DNASE"/>
    <property type="match status" value="1"/>
</dbReference>
<dbReference type="Pfam" id="PF02017">
    <property type="entry name" value="CIDE-N"/>
    <property type="match status" value="1"/>
</dbReference>
<dbReference type="Pfam" id="PF09230">
    <property type="entry name" value="DFF40"/>
    <property type="match status" value="1"/>
</dbReference>
<dbReference type="SMART" id="SM00266">
    <property type="entry name" value="CAD"/>
    <property type="match status" value="1"/>
</dbReference>
<dbReference type="SUPFAM" id="SSF54277">
    <property type="entry name" value="CAD &amp; PB1 domains"/>
    <property type="match status" value="1"/>
</dbReference>
<dbReference type="SUPFAM" id="SSF54060">
    <property type="entry name" value="His-Me finger endonucleases"/>
    <property type="match status" value="1"/>
</dbReference>
<dbReference type="PROSITE" id="PS51135">
    <property type="entry name" value="CIDE_N"/>
    <property type="match status" value="1"/>
</dbReference>
<comment type="function">
    <text>Nuclease that induces DNA fragmentation and chromatin condensation during apoptosis. Degrades naked DNA and induces apoptotic morphology.</text>
</comment>
<comment type="activity regulation">
    <text>Inhibited by DFFA (DFF45).</text>
</comment>
<comment type="subunit">
    <text evidence="3 4">Heterodimer of DFFA and DFFB (PubMed:11371636). Interacts with H1-1 (PubMed:19882353).</text>
</comment>
<comment type="interaction">
    <interactant intactId="EBI-1053821">
        <id>O76075</id>
    </interactant>
    <interactant intactId="EBI-727171">
        <id>O00273</id>
        <label>DFFA</label>
    </interactant>
    <organismsDiffer>false</organismsDiffer>
    <experiments>8</experiments>
</comment>
<comment type="subcellular location">
    <subcellularLocation>
        <location>Cytoplasm</location>
    </subcellularLocation>
    <subcellularLocation>
        <location>Nucleus</location>
    </subcellularLocation>
</comment>
<comment type="alternative products">
    <event type="alternative splicing"/>
    <isoform>
        <id>O76075-1</id>
        <name>Alpha</name>
        <sequence type="displayed"/>
    </isoform>
    <isoform>
        <id>O76075-2</id>
        <name>Beta</name>
        <sequence type="described" ref="VSP_001080"/>
    </isoform>
    <isoform>
        <id>O76075-3</id>
        <name>Gamma</name>
        <sequence type="described" ref="VSP_001081 VSP_001082"/>
    </isoform>
    <isoform>
        <id>O76075-4</id>
        <name>Delta</name>
        <sequence type="described" ref="VSP_001083 VSP_001084"/>
    </isoform>
</comment>
<comment type="miscellaneous">
    <molecule>Isoform Beta</molecule>
    <text evidence="6">May be produced at very low levels due to a premature stop codon in the mRNA, leading to nonsense-mediated mRNA decay.</text>
</comment>
<comment type="miscellaneous">
    <molecule>Isoform Gamma</molecule>
    <text evidence="6">May be produced at very low levels due to a premature stop codon in the mRNA, leading to nonsense-mediated mRNA decay.</text>
</comment>
<comment type="miscellaneous">
    <molecule>Isoform Delta</molecule>
    <text evidence="6">May be produced at very low levels due to a premature stop codon in the mRNA, leading to nonsense-mediated mRNA decay.</text>
</comment>
<accession>O76075</accession>
<accession>O60521</accession>
<accession>Q5SR22</accession>
<accession>Q9BYI4</accession>
<accession>Q9BYI5</accession>
<accession>Q9BYI6</accession>
<sequence>MLQKPKSVKLRALRSPRKFGVAGRSCQEVLRKGCLRFQLPERGSRLCLYEDGTELTEDYFPSVPDNAELVLLTLGQAWQGYVSDIRRFLSAFHEPQVGLIQAAQQLLCDEQAPQRQRLLADLLHNVSQNIAAETRAEDPPWFEGLESRFQSKSGYLRYSCESRIRSYLREVSSYPSTVGAEAQEEFLRVLGSMCQRLRSMQYNGSYFDRGAKGGSRLCTPEGWFSCQGPFDMDSCLSRHSINPYSNRESRILFSTWNLDHIIEKKRTIIPTLVEAIKEQDGREVDWEYFYGLLFTSENLKLVHIVCHKKTTHKLNCDPSRIYKPQTRLKRKQPVRKRQ</sequence>
<name>DFFB_HUMAN</name>
<protein>
    <recommendedName>
        <fullName>DNA fragmentation factor subunit beta</fullName>
        <ecNumber>3.-.-.-</ecNumber>
    </recommendedName>
    <alternativeName>
        <fullName>Caspase-activated deoxyribonuclease</fullName>
        <shortName>CAD</shortName>
        <shortName>Caspase-activated DNase</shortName>
    </alternativeName>
    <alternativeName>
        <fullName>Caspase-activated nuclease</fullName>
        <shortName>CPAN</shortName>
    </alternativeName>
    <alternativeName>
        <fullName>DNA fragmentation factor 40 kDa subunit</fullName>
        <shortName>DFF-40</shortName>
    </alternativeName>
</protein>
<evidence type="ECO:0000255" key="1">
    <source>
        <dbReference type="PROSITE-ProRule" id="PRU00447"/>
    </source>
</evidence>
<evidence type="ECO:0000269" key="2">
    <source>
    </source>
</evidence>
<evidence type="ECO:0000269" key="3">
    <source>
    </source>
</evidence>
<evidence type="ECO:0000269" key="4">
    <source>
    </source>
</evidence>
<evidence type="ECO:0000303" key="5">
    <source ref="4"/>
</evidence>
<evidence type="ECO:0000305" key="6"/>
<evidence type="ECO:0007744" key="7">
    <source>
        <dbReference type="PDB" id="1IBX"/>
    </source>
</evidence>
<evidence type="ECO:0007829" key="8">
    <source>
        <dbReference type="PDB" id="1IBX"/>
    </source>
</evidence>